<evidence type="ECO:0000250" key="1">
    <source>
        <dbReference type="UniProtKB" id="Q9VD83"/>
    </source>
</evidence>
<evidence type="ECO:0000255" key="2"/>
<evidence type="ECO:0000255" key="3">
    <source>
        <dbReference type="PROSITE-ProRule" id="PRU00039"/>
    </source>
</evidence>
<evidence type="ECO:0000269" key="4">
    <source>
    </source>
</evidence>
<evidence type="ECO:0000269" key="5">
    <source>
    </source>
</evidence>
<evidence type="ECO:0000303" key="6">
    <source>
    </source>
</evidence>
<evidence type="ECO:0000303" key="7">
    <source>
    </source>
</evidence>
<evidence type="ECO:0000305" key="8"/>
<evidence type="ECO:0000312" key="9">
    <source>
        <dbReference type="EMBL" id="CAH89263.2"/>
    </source>
</evidence>
<evidence type="ECO:0000312" key="10">
    <source>
        <dbReference type="EMBL" id="CAM06631.1"/>
    </source>
</evidence>
<feature type="signal peptide" evidence="2">
    <location>
        <begin position="1"/>
        <end position="22"/>
    </location>
</feature>
<feature type="chain" id="PRO_5000223743" description="Bursicon" evidence="2">
    <location>
        <begin position="23"/>
        <end position="153"/>
    </location>
</feature>
<feature type="domain" description="CTCK" evidence="3">
    <location>
        <begin position="29"/>
        <end position="119"/>
    </location>
</feature>
<feature type="disulfide bond" evidence="3">
    <location>
        <begin position="29"/>
        <end position="78"/>
    </location>
</feature>
<feature type="disulfide bond" evidence="3">
    <location>
        <begin position="43"/>
        <end position="92"/>
    </location>
</feature>
<feature type="disulfide bond" evidence="3">
    <location>
        <begin position="53"/>
        <end position="113"/>
    </location>
</feature>
<feature type="disulfide bond" evidence="3">
    <location>
        <begin position="57"/>
        <end position="115"/>
    </location>
</feature>
<feature type="disulfide bond" evidence="3">
    <location>
        <begin position="75"/>
        <end position="118"/>
    </location>
</feature>
<feature type="disulfide bond" description="Interchain" evidence="3">
    <location>
        <position position="77"/>
    </location>
</feature>
<gene>
    <name evidence="10" type="primary">burs</name>
    <name evidence="7" type="synonym">burs-alpha</name>
    <name evidence="6" type="synonym">sc-burs</name>
</gene>
<sequence>MLLYHIVGASVLICLLNETAKAIIGVDECQATPVIHFLQYPGCVPKPIPSYACRGRCSSYLQVSGSKIWQMERSCMCCQESGEREASVSLFCPRAKPGEKKFRKVITKAPLECMCRPCTSVEEYAIIPQEIAGFADEGPFTTSAHFRRSSDLQ</sequence>
<organism>
    <name type="scientific">Apis mellifera</name>
    <name type="common">Honeybee</name>
    <dbReference type="NCBI Taxonomy" id="7460"/>
    <lineage>
        <taxon>Eukaryota</taxon>
        <taxon>Metazoa</taxon>
        <taxon>Ecdysozoa</taxon>
        <taxon>Arthropoda</taxon>
        <taxon>Hexapoda</taxon>
        <taxon>Insecta</taxon>
        <taxon>Pterygota</taxon>
        <taxon>Neoptera</taxon>
        <taxon>Endopterygota</taxon>
        <taxon>Hymenoptera</taxon>
        <taxon>Apocrita</taxon>
        <taxon>Aculeata</taxon>
        <taxon>Apoidea</taxon>
        <taxon>Anthophila</taxon>
        <taxon>Apidae</taxon>
        <taxon>Apis</taxon>
    </lineage>
</organism>
<protein>
    <recommendedName>
        <fullName>Bursicon</fullName>
    </recommendedName>
    <alternativeName>
        <fullName>Bursicon subunit alpha</fullName>
    </alternativeName>
    <alternativeName>
        <fullName>Single-chain bursicon</fullName>
    </alternativeName>
</protein>
<accession>A2VB89</accession>
<accession>Q32TG6</accession>
<accession>Q566B0</accession>
<comment type="function">
    <text evidence="4">Final heterodimeric neurohormone released at the end of the molting cycle, involved in the sclerotization (tanning) of the insect cuticle, melanization and wing spreading.</text>
</comment>
<comment type="subunit">
    <text evidence="1">Heterodimer of burs and pburs.</text>
</comment>
<comment type="subcellular location">
    <subcellularLocation>
        <location evidence="1">Secreted</location>
    </subcellularLocation>
</comment>
<comment type="sequence caution" evidence="8">
    <conflict type="erroneous gene model prediction">
        <sequence resource="EMBL-CDS" id="CAH89263"/>
    </conflict>
</comment>
<proteinExistence type="evidence at transcript level"/>
<name>BURS_APIME</name>
<dbReference type="EMBL" id="AM420631">
    <property type="protein sequence ID" value="CAM06631.1"/>
    <property type="molecule type" value="mRNA"/>
</dbReference>
<dbReference type="EMBL" id="AADG06006208">
    <property type="status" value="NOT_ANNOTATED_CDS"/>
    <property type="molecule type" value="Genomic_DNA"/>
</dbReference>
<dbReference type="EMBL" id="BN000692">
    <property type="protein sequence ID" value="CAH89263.2"/>
    <property type="status" value="ALT_SEQ"/>
    <property type="molecule type" value="mRNA"/>
</dbReference>
<dbReference type="RefSeq" id="NP_001091704.1">
    <property type="nucleotide sequence ID" value="NM_001098234.1"/>
</dbReference>
<dbReference type="FunCoup" id="A2VB89">
    <property type="interactions" value="1"/>
</dbReference>
<dbReference type="STRING" id="7460.A2VB89"/>
<dbReference type="PaxDb" id="7460-GB45446-PA"/>
<dbReference type="EnsemblMetazoa" id="NM_001098234">
    <property type="protein sequence ID" value="NP_001091704"/>
    <property type="gene ID" value="GeneID_100049551"/>
</dbReference>
<dbReference type="GeneID" id="100049551"/>
<dbReference type="KEGG" id="ame:100049551"/>
<dbReference type="CTD" id="42560"/>
<dbReference type="eggNOG" id="KOG1216">
    <property type="taxonomic scope" value="Eukaryota"/>
</dbReference>
<dbReference type="HOGENOM" id="CLU_132265_0_0_1"/>
<dbReference type="InParanoid" id="A2VB89"/>
<dbReference type="OMA" id="SFACTGR"/>
<dbReference type="OrthoDB" id="6493004at2759"/>
<dbReference type="PhylomeDB" id="A2VB89"/>
<dbReference type="Proteomes" id="UP000005203">
    <property type="component" value="Linkage group LG6"/>
</dbReference>
<dbReference type="GO" id="GO:0005576">
    <property type="term" value="C:extracellular region"/>
    <property type="evidence" value="ECO:0000250"/>
    <property type="project" value="UniProtKB"/>
</dbReference>
<dbReference type="GO" id="GO:0005615">
    <property type="term" value="C:extracellular space"/>
    <property type="evidence" value="ECO:0007669"/>
    <property type="project" value="TreeGrafter"/>
</dbReference>
<dbReference type="GO" id="GO:0036122">
    <property type="term" value="F:BMP binding"/>
    <property type="evidence" value="ECO:0007669"/>
    <property type="project" value="TreeGrafter"/>
</dbReference>
<dbReference type="GO" id="GO:0005179">
    <property type="term" value="F:hormone activity"/>
    <property type="evidence" value="ECO:0000315"/>
    <property type="project" value="UniProtKB"/>
</dbReference>
<dbReference type="GO" id="GO:0009887">
    <property type="term" value="P:animal organ morphogenesis"/>
    <property type="evidence" value="ECO:0007669"/>
    <property type="project" value="TreeGrafter"/>
</dbReference>
<dbReference type="GO" id="GO:0007593">
    <property type="term" value="P:chitin-based cuticle sclerotization"/>
    <property type="evidence" value="ECO:0000315"/>
    <property type="project" value="UniProtKB"/>
</dbReference>
<dbReference type="GO" id="GO:0048067">
    <property type="term" value="P:cuticle pigmentation"/>
    <property type="evidence" value="ECO:0000315"/>
    <property type="project" value="UniProtKB"/>
</dbReference>
<dbReference type="GO" id="GO:0038098">
    <property type="term" value="P:sequestering of BMP from receptor via BMP binding"/>
    <property type="evidence" value="ECO:0007669"/>
    <property type="project" value="TreeGrafter"/>
</dbReference>
<dbReference type="FunFam" id="2.10.90.10:FF:000054">
    <property type="entry name" value="Bursicon"/>
    <property type="match status" value="1"/>
</dbReference>
<dbReference type="Gene3D" id="2.10.90.10">
    <property type="entry name" value="Cystine-knot cytokines"/>
    <property type="match status" value="1"/>
</dbReference>
<dbReference type="InterPro" id="IPR006207">
    <property type="entry name" value="Cys_knot_C"/>
</dbReference>
<dbReference type="InterPro" id="IPR029034">
    <property type="entry name" value="Cystine-knot_cytokine"/>
</dbReference>
<dbReference type="InterPro" id="IPR004133">
    <property type="entry name" value="DAN"/>
</dbReference>
<dbReference type="PANTHER" id="PTHR15283:SF7">
    <property type="entry name" value="BURSICON"/>
    <property type="match status" value="1"/>
</dbReference>
<dbReference type="PANTHER" id="PTHR15283">
    <property type="entry name" value="GREMLIN 1"/>
    <property type="match status" value="1"/>
</dbReference>
<dbReference type="Pfam" id="PF03045">
    <property type="entry name" value="DAN"/>
    <property type="match status" value="1"/>
</dbReference>
<dbReference type="PROSITE" id="PS01225">
    <property type="entry name" value="CTCK_2"/>
    <property type="match status" value="1"/>
</dbReference>
<reference evidence="10" key="1">
    <citation type="journal article" date="2007" name="Gen. Comp. Endocrinol.">
        <title>Evolutionary conservation of bursicon in the animal kingdom.</title>
        <authorList>
            <person name="Van Loy T."/>
            <person name="Van Hiel M.B."/>
            <person name="Vandersmissen H.P."/>
            <person name="Poels J."/>
            <person name="Mendive F.M."/>
            <person name="Vassart G."/>
            <person name="Vanden Broeck J.J.M."/>
        </authorList>
    </citation>
    <scope>NUCLEOTIDE SEQUENCE [MRNA]</scope>
    <source>
        <tissue evidence="5">Larva</tissue>
    </source>
</reference>
<reference evidence="8" key="2">
    <citation type="submission" date="2010-11" db="EMBL/GenBank/DDBJ databases">
        <authorList>
            <consortium name="Honey bee genome project"/>
            <person name="Zhang L."/>
            <person name="Deng J."/>
            <person name="Wu Y.-Q."/>
            <person name="Kovar C."/>
            <person name="Aqrawi P."/>
            <person name="Bandaranaike D."/>
            <person name="Blankenburg K."/>
            <person name="Chen D."/>
            <person name="Denson S."/>
            <person name="Dinh H."/>
            <person name="Firestine M."/>
            <person name="Gross S."/>
            <person name="Han Y."/>
            <person name="Hernandez B."/>
            <person name="Holder M."/>
            <person name="Jackson L."/>
            <person name="Javaid M."/>
            <person name="Jing C."/>
            <person name="Jones J."/>
            <person name="Joshi V."/>
            <person name="Kamau G."/>
            <person name="Korchina V."/>
            <person name="Lee S."/>
            <person name="Lorensuhewa L."/>
            <person name="Mata R."/>
            <person name="Mathew T."/>
            <person name="Mims S."/>
            <person name="Ngo R."/>
            <person name="Nguyen L."/>
            <person name="Okwuonu G."/>
            <person name="Ongeri F."/>
            <person name="Osuji N."/>
            <person name="Pham C."/>
            <person name="Puazo M."/>
            <person name="Qu C."/>
            <person name="Quiroz J."/>
            <person name="Raj R."/>
            <person name="Rio Deiros D."/>
            <person name="Santibanez J."/>
            <person name="Scheel M."/>
            <person name="Scherer S."/>
            <person name="Vee V."/>
            <person name="Wang M."/>
            <person name="Xin Y."/>
            <person name="Richards S."/>
            <person name="Reid J.G."/>
            <person name="Newsham I."/>
            <person name="Worley K.C."/>
            <person name="Muzny D.M."/>
            <person name="Gibbs R."/>
        </authorList>
    </citation>
    <scope>NUCLEOTIDE SEQUENCE [LARGE SCALE GENOMIC DNA]</scope>
    <source>
        <strain>DH4</strain>
    </source>
</reference>
<reference evidence="8 9" key="3">
    <citation type="journal article" date="2005" name="FEBS Lett.">
        <title>Drosophila molting neurohormone bursicon is a heterodimer and the natural agonist of the orphan receptor DLGR2.</title>
        <authorList>
            <person name="Mendive F.M."/>
            <person name="Van Loy T."/>
            <person name="Claeysen S."/>
            <person name="Poels J."/>
            <person name="Williamson M."/>
            <person name="Hauser F."/>
            <person name="Grimmelikhuijzen C.J.P."/>
            <person name="Vassart G."/>
            <person name="Vanden Broeck J.J.M."/>
        </authorList>
    </citation>
    <scope>IDENTIFICATION</scope>
    <scope>FUNCTION</scope>
</reference>
<keyword id="KW-1015">Disulfide bond</keyword>
<keyword id="KW-0372">Hormone</keyword>
<keyword id="KW-1185">Reference proteome</keyword>
<keyword id="KW-0964">Secreted</keyword>
<keyword id="KW-0732">Signal</keyword>